<evidence type="ECO:0000250" key="1">
    <source>
        <dbReference type="UniProtKB" id="Q96CN5"/>
    </source>
</evidence>
<evidence type="ECO:0000255" key="2"/>
<accession>Q5ZI11</accession>
<gene>
    <name type="primary">LRRC45</name>
    <name type="ORF">RCJMB04_31i7</name>
</gene>
<proteinExistence type="evidence at transcript level"/>
<feature type="chain" id="PRO_0000223925" description="Leucine-rich repeat-containing protein 45">
    <location>
        <begin position="1"/>
        <end position="670"/>
    </location>
</feature>
<feature type="repeat" description="LRR 1">
    <location>
        <begin position="87"/>
        <end position="108"/>
    </location>
</feature>
<feature type="repeat" description="LRR 2">
    <location>
        <begin position="115"/>
        <end position="136"/>
    </location>
</feature>
<feature type="repeat" description="LRR 3">
    <location>
        <begin position="145"/>
        <end position="166"/>
    </location>
</feature>
<feature type="repeat" description="LRR 4">
    <location>
        <begin position="173"/>
        <end position="194"/>
    </location>
</feature>
<feature type="repeat" description="LRR 5">
    <location>
        <begin position="201"/>
        <end position="223"/>
    </location>
</feature>
<feature type="coiled-coil region" evidence="2">
    <location>
        <begin position="234"/>
        <end position="645"/>
    </location>
</feature>
<organism>
    <name type="scientific">Gallus gallus</name>
    <name type="common">Chicken</name>
    <dbReference type="NCBI Taxonomy" id="9031"/>
    <lineage>
        <taxon>Eukaryota</taxon>
        <taxon>Metazoa</taxon>
        <taxon>Chordata</taxon>
        <taxon>Craniata</taxon>
        <taxon>Vertebrata</taxon>
        <taxon>Euteleostomi</taxon>
        <taxon>Archelosauria</taxon>
        <taxon>Archosauria</taxon>
        <taxon>Dinosauria</taxon>
        <taxon>Saurischia</taxon>
        <taxon>Theropoda</taxon>
        <taxon>Coelurosauria</taxon>
        <taxon>Aves</taxon>
        <taxon>Neognathae</taxon>
        <taxon>Galloanserae</taxon>
        <taxon>Galliformes</taxon>
        <taxon>Phasianidae</taxon>
        <taxon>Phasianinae</taxon>
        <taxon>Gallus</taxon>
    </lineage>
</organism>
<protein>
    <recommendedName>
        <fullName>Leucine-rich repeat-containing protein 45</fullName>
    </recommendedName>
</protein>
<comment type="function">
    <text evidence="1">Component of the proteinaceous fiber-like linker between two centrioles, required for centrosome cohesion.</text>
</comment>
<comment type="subunit">
    <text evidence="1">Homomer.</text>
</comment>
<comment type="subcellular location">
    <subcellularLocation>
        <location evidence="1">Cytoplasm</location>
        <location evidence="1">Cytoskeleton</location>
        <location evidence="1">Microtubule organizing center</location>
        <location evidence="1">Centrosome</location>
    </subcellularLocation>
    <text evidence="1">Localizes to the proteinaceous linker between the proximal ends of the centrioles.</text>
</comment>
<sequence>MEEFRRAYAKLCAAPQEAVLRRLRERGEAPGRARLDLAEQSLSLETCGALGRLLPGAAHFAEVALGDCGLSEDGVKLLLHGLCSNSTVKSLDLKGNNLRTTGAEALGKLLRQNKSIRSLILEWNSLGVWEEGFSFFCQGLGANNFLQRLDLRNNQINHHGAGELAMALKRNASLQELDLRWNNIGLLGGRALLNCLQSNKTLKKLELAGNNVPSDILKAVEQAMDHNRDRQTILSETQNRTSVLSKEILNLKDEKTKQFLDLMDTIDKQREEIARSGRISAGRVSQLQEALNEQHSIMNSLKAKLQMTEAALALSEQKVHNLGELLSATKQEQASMAERHFAELQQQKQEGADREGKLFRDLSASNEKNLFLRNQVDELEKKCKVQQDQIFQLKQDLTNTTAELKLRAVQAEERLEMEKRRFKQSLEDMESLRLKEVDHLTQHMEASERSMQDRVQRLEAIRIALEEELSQVKAAALTERGHAEEELIKVRNQARLEEQQRVEHLEEKLRLMTEARDEAQNCCLKQKQMVGEAQVKANQLNLHADGLRRRIEELQQDLNSKEQEKVTEVNKVKVELQEQIGHLQAERTAQEGLREKIAALERQLKVLSSNHREALLDKEGEISMLMEKLRMKEADISRMKEEEAQRASILQNAIMAYVQGSSLGTHSLRK</sequence>
<dbReference type="EMBL" id="AJ720973">
    <property type="protein sequence ID" value="CAG32632.1"/>
    <property type="molecule type" value="mRNA"/>
</dbReference>
<dbReference type="RefSeq" id="NP_001073224.1">
    <property type="nucleotide sequence ID" value="NM_001079756.3"/>
</dbReference>
<dbReference type="SMR" id="Q5ZI11"/>
<dbReference type="FunCoup" id="Q5ZI11">
    <property type="interactions" value="230"/>
</dbReference>
<dbReference type="STRING" id="9031.ENSGALP00000004528"/>
<dbReference type="PaxDb" id="9031-ENSGALP00000004528"/>
<dbReference type="GeneID" id="770573"/>
<dbReference type="KEGG" id="gga:770573"/>
<dbReference type="CTD" id="201255"/>
<dbReference type="VEuPathDB" id="HostDB:geneid_770573"/>
<dbReference type="eggNOG" id="KOG4308">
    <property type="taxonomic scope" value="Eukaryota"/>
</dbReference>
<dbReference type="InParanoid" id="Q5ZI11"/>
<dbReference type="OrthoDB" id="8436363at2759"/>
<dbReference type="PhylomeDB" id="Q5ZI11"/>
<dbReference type="PRO" id="PR:Q5ZI11"/>
<dbReference type="Proteomes" id="UP000000539">
    <property type="component" value="Unassembled WGS sequence"/>
</dbReference>
<dbReference type="GO" id="GO:0005813">
    <property type="term" value="C:centrosome"/>
    <property type="evidence" value="ECO:0000318"/>
    <property type="project" value="GO_Central"/>
</dbReference>
<dbReference type="GO" id="GO:0005737">
    <property type="term" value="C:cytoplasm"/>
    <property type="evidence" value="ECO:0007669"/>
    <property type="project" value="UniProtKB-KW"/>
</dbReference>
<dbReference type="GO" id="GO:0005886">
    <property type="term" value="C:plasma membrane"/>
    <property type="evidence" value="ECO:0000318"/>
    <property type="project" value="GO_Central"/>
</dbReference>
<dbReference type="Gene3D" id="3.80.10.10">
    <property type="entry name" value="Ribonuclease Inhibitor"/>
    <property type="match status" value="2"/>
</dbReference>
<dbReference type="InterPro" id="IPR052116">
    <property type="entry name" value="Centro_Cilium_Assembly"/>
</dbReference>
<dbReference type="InterPro" id="IPR001611">
    <property type="entry name" value="Leu-rich_rpt"/>
</dbReference>
<dbReference type="InterPro" id="IPR032675">
    <property type="entry name" value="LRR_dom_sf"/>
</dbReference>
<dbReference type="PANTHER" id="PTHR23170:SF3">
    <property type="entry name" value="LEUCINE-RICH REPEAT-CONTAINING PROTEIN 45"/>
    <property type="match status" value="1"/>
</dbReference>
<dbReference type="PANTHER" id="PTHR23170">
    <property type="entry name" value="NY-REN-58 ANTIGEN"/>
    <property type="match status" value="1"/>
</dbReference>
<dbReference type="Pfam" id="PF13516">
    <property type="entry name" value="LRR_6"/>
    <property type="match status" value="3"/>
</dbReference>
<dbReference type="SMART" id="SM00368">
    <property type="entry name" value="LRR_RI"/>
    <property type="match status" value="6"/>
</dbReference>
<dbReference type="SUPFAM" id="SSF52047">
    <property type="entry name" value="RNI-like"/>
    <property type="match status" value="1"/>
</dbReference>
<reference key="1">
    <citation type="journal article" date="2005" name="Genome Biol.">
        <title>Full-length cDNAs from chicken bursal lymphocytes to facilitate gene function analysis.</title>
        <authorList>
            <person name="Caldwell R.B."/>
            <person name="Kierzek A.M."/>
            <person name="Arakawa H."/>
            <person name="Bezzubov Y."/>
            <person name="Zaim J."/>
            <person name="Fiedler P."/>
            <person name="Kutter S."/>
            <person name="Blagodatski A."/>
            <person name="Kostovska D."/>
            <person name="Koter M."/>
            <person name="Plachy J."/>
            <person name="Carninci P."/>
            <person name="Hayashizaki Y."/>
            <person name="Buerstedde J.-M."/>
        </authorList>
    </citation>
    <scope>NUCLEOTIDE SEQUENCE [LARGE SCALE MRNA]</scope>
    <source>
        <strain>CB</strain>
        <tissue>Bursa of Fabricius</tissue>
    </source>
</reference>
<name>LRC45_CHICK</name>
<keyword id="KW-0175">Coiled coil</keyword>
<keyword id="KW-0963">Cytoplasm</keyword>
<keyword id="KW-0206">Cytoskeleton</keyword>
<keyword id="KW-0433">Leucine-rich repeat</keyword>
<keyword id="KW-1185">Reference proteome</keyword>
<keyword id="KW-0677">Repeat</keyword>